<sequence length="805" mass="90595">MQINENKGFPTEIPIIVEDELFLYPFMITPLFLSDEENLKALELAIQGETPILVVPTKPQQDGARDFDGIYDAGVIGTIMRRVPLPDGRVKVLFQGIDKGKILKQSGINPLRGIVDMLHVKRPSQVKTDALIVVLREKVRELSQFNHFFPPDLLKTIEESAEAVRVCDLVSSALRLKKQIAYSFFVEENLEQRLLKLIDYVIEEIEANKLQKEIKNKVHSKIDKTNKEYFLKEQLKQIQAELGADTSREEELEEYRKKLDAKKKFMAEDAYKEIKKQIDKLSRMHPDSADANTLQSYLDWVLEIPFENVAKKKSSIAEVSKHLNADHYSLEKPKERIEEYFALRELLELRGVGEKVNNGAILCFAGPPGVGKTSLANSIAKALKRELVRIALGGLEDVNELRGHRRTYIGAMPGRIVQGLIEAKQMNPVVVLDEIDKVGRSYRGDPTAVLLEILDPEQNNKFRDYYLNFNIDLSKIIFIATANDVSMIPAALRDRMEFIELSSYTPQEKFEIAKKYLLPQELKKHGLKPSDVSISKEALELIISDYTRESGVRNLRRRIADILRKVAKNILTKKNEGKISVTAKNLKEFLEKKVYEIEPADKKDQIGLVNGLAWTSVGGDVLRIEAIRIQGKGSMQITGQLGDVMKESAQIAFSVVKVLIDNKKLKVPMPIVPKFDDDKHKLEASDVYRRYDLHLHVPEGAVPKDGPSAGITMATAIASILTDTKVKHDIAMTGEITLTGRVLPIGGLKEKLIAAHKAGIKTALIPRKNYDRDLVDIPAEVKADMKIIAVDTIDDVLKNALVAKK</sequence>
<proteinExistence type="inferred from homology"/>
<protein>
    <recommendedName>
        <fullName evidence="1">Lon protease</fullName>
        <ecNumber evidence="1">3.4.21.53</ecNumber>
    </recommendedName>
    <alternativeName>
        <fullName evidence="1">ATP-dependent protease La</fullName>
    </alternativeName>
</protein>
<dbReference type="EC" id="3.4.21.53" evidence="1"/>
<dbReference type="EMBL" id="CP000792">
    <property type="protein sequence ID" value="EAT98804.1"/>
    <property type="molecule type" value="Genomic_DNA"/>
</dbReference>
<dbReference type="RefSeq" id="WP_012140105.1">
    <property type="nucleotide sequence ID" value="NC_009802.2"/>
</dbReference>
<dbReference type="SMR" id="A7ZEJ3"/>
<dbReference type="STRING" id="360104.CCC13826_1958"/>
<dbReference type="MEROPS" id="S16.001"/>
<dbReference type="KEGG" id="cco:CCC13826_1958"/>
<dbReference type="eggNOG" id="COG0466">
    <property type="taxonomic scope" value="Bacteria"/>
</dbReference>
<dbReference type="HOGENOM" id="CLU_004109_4_3_7"/>
<dbReference type="OrthoDB" id="9803599at2"/>
<dbReference type="Proteomes" id="UP000001121">
    <property type="component" value="Chromosome"/>
</dbReference>
<dbReference type="GO" id="GO:0005737">
    <property type="term" value="C:cytoplasm"/>
    <property type="evidence" value="ECO:0007669"/>
    <property type="project" value="UniProtKB-SubCell"/>
</dbReference>
<dbReference type="GO" id="GO:0005524">
    <property type="term" value="F:ATP binding"/>
    <property type="evidence" value="ECO:0007669"/>
    <property type="project" value="UniProtKB-UniRule"/>
</dbReference>
<dbReference type="GO" id="GO:0016887">
    <property type="term" value="F:ATP hydrolysis activity"/>
    <property type="evidence" value="ECO:0007669"/>
    <property type="project" value="UniProtKB-UniRule"/>
</dbReference>
<dbReference type="GO" id="GO:0004176">
    <property type="term" value="F:ATP-dependent peptidase activity"/>
    <property type="evidence" value="ECO:0007669"/>
    <property type="project" value="UniProtKB-UniRule"/>
</dbReference>
<dbReference type="GO" id="GO:0043565">
    <property type="term" value="F:sequence-specific DNA binding"/>
    <property type="evidence" value="ECO:0007669"/>
    <property type="project" value="UniProtKB-UniRule"/>
</dbReference>
<dbReference type="GO" id="GO:0004252">
    <property type="term" value="F:serine-type endopeptidase activity"/>
    <property type="evidence" value="ECO:0007669"/>
    <property type="project" value="UniProtKB-UniRule"/>
</dbReference>
<dbReference type="GO" id="GO:0034605">
    <property type="term" value="P:cellular response to heat"/>
    <property type="evidence" value="ECO:0007669"/>
    <property type="project" value="UniProtKB-UniRule"/>
</dbReference>
<dbReference type="GO" id="GO:0006515">
    <property type="term" value="P:protein quality control for misfolded or incompletely synthesized proteins"/>
    <property type="evidence" value="ECO:0007669"/>
    <property type="project" value="UniProtKB-UniRule"/>
</dbReference>
<dbReference type="CDD" id="cd19500">
    <property type="entry name" value="RecA-like_Lon"/>
    <property type="match status" value="1"/>
</dbReference>
<dbReference type="FunFam" id="3.40.50.300:FF:000021">
    <property type="entry name" value="Lon protease homolog"/>
    <property type="match status" value="1"/>
</dbReference>
<dbReference type="Gene3D" id="1.10.8.60">
    <property type="match status" value="1"/>
</dbReference>
<dbReference type="Gene3D" id="1.20.5.5270">
    <property type="match status" value="1"/>
</dbReference>
<dbReference type="Gene3D" id="1.20.58.1480">
    <property type="match status" value="1"/>
</dbReference>
<dbReference type="Gene3D" id="3.30.230.10">
    <property type="match status" value="1"/>
</dbReference>
<dbReference type="Gene3D" id="2.30.130.40">
    <property type="entry name" value="LON domain-like"/>
    <property type="match status" value="1"/>
</dbReference>
<dbReference type="Gene3D" id="3.40.50.300">
    <property type="entry name" value="P-loop containing nucleotide triphosphate hydrolases"/>
    <property type="match status" value="1"/>
</dbReference>
<dbReference type="HAMAP" id="MF_01973">
    <property type="entry name" value="lon_bact"/>
    <property type="match status" value="1"/>
</dbReference>
<dbReference type="InterPro" id="IPR003593">
    <property type="entry name" value="AAA+_ATPase"/>
</dbReference>
<dbReference type="InterPro" id="IPR003959">
    <property type="entry name" value="ATPase_AAA_core"/>
</dbReference>
<dbReference type="InterPro" id="IPR027543">
    <property type="entry name" value="Lon_bac"/>
</dbReference>
<dbReference type="InterPro" id="IPR004815">
    <property type="entry name" value="Lon_bac/euk-typ"/>
</dbReference>
<dbReference type="InterPro" id="IPR054594">
    <property type="entry name" value="Lon_lid"/>
</dbReference>
<dbReference type="InterPro" id="IPR008269">
    <property type="entry name" value="Lon_proteolytic"/>
</dbReference>
<dbReference type="InterPro" id="IPR027065">
    <property type="entry name" value="Lon_Prtase"/>
</dbReference>
<dbReference type="InterPro" id="IPR003111">
    <property type="entry name" value="Lon_prtase_N"/>
</dbReference>
<dbReference type="InterPro" id="IPR046336">
    <property type="entry name" value="Lon_prtase_N_sf"/>
</dbReference>
<dbReference type="InterPro" id="IPR027417">
    <property type="entry name" value="P-loop_NTPase"/>
</dbReference>
<dbReference type="InterPro" id="IPR008268">
    <property type="entry name" value="Peptidase_S16_AS"/>
</dbReference>
<dbReference type="InterPro" id="IPR015947">
    <property type="entry name" value="PUA-like_sf"/>
</dbReference>
<dbReference type="InterPro" id="IPR020568">
    <property type="entry name" value="Ribosomal_Su5_D2-typ_SF"/>
</dbReference>
<dbReference type="InterPro" id="IPR014721">
    <property type="entry name" value="Ribsml_uS5_D2-typ_fold_subgr"/>
</dbReference>
<dbReference type="NCBIfam" id="TIGR00763">
    <property type="entry name" value="lon"/>
    <property type="match status" value="1"/>
</dbReference>
<dbReference type="PANTHER" id="PTHR43718">
    <property type="entry name" value="LON PROTEASE"/>
    <property type="match status" value="1"/>
</dbReference>
<dbReference type="PANTHER" id="PTHR43718:SF2">
    <property type="entry name" value="LON PROTEASE HOMOLOG, MITOCHONDRIAL"/>
    <property type="match status" value="1"/>
</dbReference>
<dbReference type="Pfam" id="PF00004">
    <property type="entry name" value="AAA"/>
    <property type="match status" value="1"/>
</dbReference>
<dbReference type="Pfam" id="PF05362">
    <property type="entry name" value="Lon_C"/>
    <property type="match status" value="1"/>
</dbReference>
<dbReference type="Pfam" id="PF22667">
    <property type="entry name" value="Lon_lid"/>
    <property type="match status" value="1"/>
</dbReference>
<dbReference type="Pfam" id="PF02190">
    <property type="entry name" value="LON_substr_bdg"/>
    <property type="match status" value="1"/>
</dbReference>
<dbReference type="PIRSF" id="PIRSF001174">
    <property type="entry name" value="Lon_proteas"/>
    <property type="match status" value="1"/>
</dbReference>
<dbReference type="PRINTS" id="PR00830">
    <property type="entry name" value="ENDOLAPTASE"/>
</dbReference>
<dbReference type="SMART" id="SM00382">
    <property type="entry name" value="AAA"/>
    <property type="match status" value="1"/>
</dbReference>
<dbReference type="SMART" id="SM00464">
    <property type="entry name" value="LON"/>
    <property type="match status" value="1"/>
</dbReference>
<dbReference type="SUPFAM" id="SSF52540">
    <property type="entry name" value="P-loop containing nucleoside triphosphate hydrolases"/>
    <property type="match status" value="1"/>
</dbReference>
<dbReference type="SUPFAM" id="SSF88697">
    <property type="entry name" value="PUA domain-like"/>
    <property type="match status" value="1"/>
</dbReference>
<dbReference type="SUPFAM" id="SSF54211">
    <property type="entry name" value="Ribosomal protein S5 domain 2-like"/>
    <property type="match status" value="1"/>
</dbReference>
<dbReference type="PROSITE" id="PS51787">
    <property type="entry name" value="LON_N"/>
    <property type="match status" value="1"/>
</dbReference>
<dbReference type="PROSITE" id="PS51786">
    <property type="entry name" value="LON_PROTEOLYTIC"/>
    <property type="match status" value="1"/>
</dbReference>
<dbReference type="PROSITE" id="PS01046">
    <property type="entry name" value="LON_SER"/>
    <property type="match status" value="1"/>
</dbReference>
<feature type="chain" id="PRO_0000396542" description="Lon protease">
    <location>
        <begin position="1"/>
        <end position="805"/>
    </location>
</feature>
<feature type="domain" description="Lon N-terminal" evidence="3">
    <location>
        <begin position="13"/>
        <end position="205"/>
    </location>
</feature>
<feature type="domain" description="Lon proteolytic" evidence="2">
    <location>
        <begin position="603"/>
        <end position="803"/>
    </location>
</feature>
<feature type="active site" evidence="1">
    <location>
        <position position="708"/>
    </location>
</feature>
<feature type="active site" evidence="1">
    <location>
        <position position="751"/>
    </location>
</feature>
<feature type="binding site" evidence="1">
    <location>
        <begin position="366"/>
        <end position="373"/>
    </location>
    <ligand>
        <name>ATP</name>
        <dbReference type="ChEBI" id="CHEBI:30616"/>
    </ligand>
</feature>
<gene>
    <name evidence="1" type="primary">lon</name>
    <name type="ordered locus">Ccon26_13520</name>
    <name type="ORF">CCC13826_1958</name>
</gene>
<keyword id="KW-0067">ATP-binding</keyword>
<keyword id="KW-0963">Cytoplasm</keyword>
<keyword id="KW-0378">Hydrolase</keyword>
<keyword id="KW-0547">Nucleotide-binding</keyword>
<keyword id="KW-0645">Protease</keyword>
<keyword id="KW-0720">Serine protease</keyword>
<keyword id="KW-0346">Stress response</keyword>
<evidence type="ECO:0000255" key="1">
    <source>
        <dbReference type="HAMAP-Rule" id="MF_01973"/>
    </source>
</evidence>
<evidence type="ECO:0000255" key="2">
    <source>
        <dbReference type="PROSITE-ProRule" id="PRU01122"/>
    </source>
</evidence>
<evidence type="ECO:0000255" key="3">
    <source>
        <dbReference type="PROSITE-ProRule" id="PRU01123"/>
    </source>
</evidence>
<reference key="1">
    <citation type="submission" date="2007-10" db="EMBL/GenBank/DDBJ databases">
        <title>Genome sequence of Campylobacter concisus 13826 isolated from human feces.</title>
        <authorList>
            <person name="Fouts D.E."/>
            <person name="Mongodin E.F."/>
            <person name="Puiu D."/>
            <person name="Sebastian Y."/>
            <person name="Miller W.G."/>
            <person name="Mandrell R.E."/>
            <person name="On S."/>
            <person name="Nelson K.E."/>
        </authorList>
    </citation>
    <scope>NUCLEOTIDE SEQUENCE [LARGE SCALE GENOMIC DNA]</scope>
    <source>
        <strain>13826</strain>
    </source>
</reference>
<comment type="function">
    <text evidence="1">ATP-dependent serine protease that mediates the selective degradation of mutant and abnormal proteins as well as certain short-lived regulatory proteins. Required for cellular homeostasis and for survival from DNA damage and developmental changes induced by stress. Degrades polypeptides processively to yield small peptide fragments that are 5 to 10 amino acids long. Binds to DNA in a double-stranded, site-specific manner.</text>
</comment>
<comment type="catalytic activity">
    <reaction evidence="1">
        <text>Hydrolysis of proteins in presence of ATP.</text>
        <dbReference type="EC" id="3.4.21.53"/>
    </reaction>
</comment>
<comment type="subunit">
    <text evidence="1">Homohexamer. Organized in a ring with a central cavity.</text>
</comment>
<comment type="subcellular location">
    <subcellularLocation>
        <location evidence="1">Cytoplasm</location>
    </subcellularLocation>
</comment>
<comment type="induction">
    <text evidence="1">By heat shock.</text>
</comment>
<comment type="similarity">
    <text evidence="1">Belongs to the peptidase S16 family.</text>
</comment>
<organism>
    <name type="scientific">Campylobacter concisus (strain 13826)</name>
    <dbReference type="NCBI Taxonomy" id="360104"/>
    <lineage>
        <taxon>Bacteria</taxon>
        <taxon>Pseudomonadati</taxon>
        <taxon>Campylobacterota</taxon>
        <taxon>Epsilonproteobacteria</taxon>
        <taxon>Campylobacterales</taxon>
        <taxon>Campylobacteraceae</taxon>
        <taxon>Campylobacter</taxon>
    </lineage>
</organism>
<name>LON_CAMC1</name>
<accession>A7ZEJ3</accession>